<organism>
    <name type="scientific">Alkaliphilus oremlandii (strain OhILAs)</name>
    <name type="common">Clostridium oremlandii (strain OhILAs)</name>
    <dbReference type="NCBI Taxonomy" id="350688"/>
    <lineage>
        <taxon>Bacteria</taxon>
        <taxon>Bacillati</taxon>
        <taxon>Bacillota</taxon>
        <taxon>Clostridia</taxon>
        <taxon>Peptostreptococcales</taxon>
        <taxon>Natronincolaceae</taxon>
        <taxon>Alkaliphilus</taxon>
    </lineage>
</organism>
<accession>A8MGI2</accession>
<comment type="similarity">
    <text evidence="1">Belongs to the UPF0297 family.</text>
</comment>
<keyword id="KW-1185">Reference proteome</keyword>
<sequence length="85" mass="10038">MTDNLNFTMKFDLDKDKEKKAREIIFTVYQSLEEKGYNPTNQFVGYILSGDPTYITSHNNARSLIRQIERDELLEELLKSYLNTK</sequence>
<name>Y1665_ALKOO</name>
<proteinExistence type="inferred from homology"/>
<reference key="1">
    <citation type="submission" date="2007-10" db="EMBL/GenBank/DDBJ databases">
        <title>Complete genome of Alkaliphilus oremlandii OhILAs.</title>
        <authorList>
            <person name="Copeland A."/>
            <person name="Lucas S."/>
            <person name="Lapidus A."/>
            <person name="Barry K."/>
            <person name="Detter J.C."/>
            <person name="Glavina del Rio T."/>
            <person name="Hammon N."/>
            <person name="Israni S."/>
            <person name="Dalin E."/>
            <person name="Tice H."/>
            <person name="Pitluck S."/>
            <person name="Chain P."/>
            <person name="Malfatti S."/>
            <person name="Shin M."/>
            <person name="Vergez L."/>
            <person name="Schmutz J."/>
            <person name="Larimer F."/>
            <person name="Land M."/>
            <person name="Hauser L."/>
            <person name="Kyrpides N."/>
            <person name="Mikhailova N."/>
            <person name="Stolz J.F."/>
            <person name="Dawson A."/>
            <person name="Fisher E."/>
            <person name="Crable B."/>
            <person name="Perera E."/>
            <person name="Lisak J."/>
            <person name="Ranganathan M."/>
            <person name="Basu P."/>
            <person name="Richardson P."/>
        </authorList>
    </citation>
    <scope>NUCLEOTIDE SEQUENCE [LARGE SCALE GENOMIC DNA]</scope>
    <source>
        <strain>OhILAs</strain>
    </source>
</reference>
<feature type="chain" id="PRO_0000318538" description="UPF0297 protein Clos_1665">
    <location>
        <begin position="1"/>
        <end position="85"/>
    </location>
</feature>
<protein>
    <recommendedName>
        <fullName evidence="1">UPF0297 protein Clos_1665</fullName>
    </recommendedName>
</protein>
<dbReference type="EMBL" id="CP000853">
    <property type="protein sequence ID" value="ABW19205.1"/>
    <property type="molecule type" value="Genomic_DNA"/>
</dbReference>
<dbReference type="RefSeq" id="WP_012159517.1">
    <property type="nucleotide sequence ID" value="NC_009922.1"/>
</dbReference>
<dbReference type="SMR" id="A8MGI2"/>
<dbReference type="STRING" id="350688.Clos_1665"/>
<dbReference type="KEGG" id="aoe:Clos_1665"/>
<dbReference type="eggNOG" id="COG4472">
    <property type="taxonomic scope" value="Bacteria"/>
</dbReference>
<dbReference type="HOGENOM" id="CLU_162466_0_0_9"/>
<dbReference type="OrthoDB" id="9796303at2"/>
<dbReference type="Proteomes" id="UP000000269">
    <property type="component" value="Chromosome"/>
</dbReference>
<dbReference type="HAMAP" id="MF_01507">
    <property type="entry name" value="UPF0297"/>
    <property type="match status" value="1"/>
</dbReference>
<dbReference type="InterPro" id="IPR009309">
    <property type="entry name" value="IreB"/>
</dbReference>
<dbReference type="NCBIfam" id="NF003997">
    <property type="entry name" value="PRK05473.1"/>
    <property type="match status" value="1"/>
</dbReference>
<dbReference type="PANTHER" id="PTHR40067">
    <property type="entry name" value="UPF0297 PROTEIN YRZL"/>
    <property type="match status" value="1"/>
</dbReference>
<dbReference type="PANTHER" id="PTHR40067:SF1">
    <property type="entry name" value="UPF0297 PROTEIN YRZL"/>
    <property type="match status" value="1"/>
</dbReference>
<dbReference type="Pfam" id="PF06135">
    <property type="entry name" value="IreB"/>
    <property type="match status" value="1"/>
</dbReference>
<dbReference type="PIRSF" id="PIRSF037258">
    <property type="entry name" value="DUF965_bac"/>
    <property type="match status" value="1"/>
</dbReference>
<gene>
    <name type="ordered locus">Clos_1665</name>
</gene>
<evidence type="ECO:0000255" key="1">
    <source>
        <dbReference type="HAMAP-Rule" id="MF_01507"/>
    </source>
</evidence>